<accession>Q8P0S6</accession>
<name>PFKA_STRP8</name>
<protein>
    <recommendedName>
        <fullName evidence="1">ATP-dependent 6-phosphofructokinase</fullName>
        <shortName evidence="1">ATP-PFK</shortName>
        <shortName evidence="1">Phosphofructokinase</shortName>
        <ecNumber evidence="1">2.7.1.11</ecNumber>
    </recommendedName>
    <alternativeName>
        <fullName evidence="1">Phosphohexokinase</fullName>
    </alternativeName>
</protein>
<sequence length="337" mass="35762">MKRIAVLTSGGDAPGMNAAIRAVVRKAISEGMEVYGINRGYAGMVDGDIFPLGSKEVGDKISRGGTFLYSARYPEFAQLEGQLAGIEQLKKHGIEGVVVIGGDGSYHGAMRLTEHGFPAVGIPGTIDNDIAGTDYTIGFDTAVNTAVEAIDKLRDTSSSHGRTFVVEVMGRNAGDIALWAGIASGADQIIVPEEEFDIEKVASTIQYDFEHKGKNHHIIVLAEGVMSGEAFAQKLKEAGDKSDLRVTNLGHILRGGSPTARDRVIASWMGSHAVELLKEGKGGLAVGIHNEELVESPILGTAEEGALFSLTEEGKIIVNNPHKARLDFAALNRSLSQ</sequence>
<keyword id="KW-0021">Allosteric enzyme</keyword>
<keyword id="KW-0067">ATP-binding</keyword>
<keyword id="KW-0963">Cytoplasm</keyword>
<keyword id="KW-0324">Glycolysis</keyword>
<keyword id="KW-0418">Kinase</keyword>
<keyword id="KW-0460">Magnesium</keyword>
<keyword id="KW-0479">Metal-binding</keyword>
<keyword id="KW-0547">Nucleotide-binding</keyword>
<keyword id="KW-0808">Transferase</keyword>
<evidence type="ECO:0000255" key="1">
    <source>
        <dbReference type="HAMAP-Rule" id="MF_00339"/>
    </source>
</evidence>
<proteinExistence type="inferred from homology"/>
<gene>
    <name evidence="1" type="primary">pfkA</name>
    <name type="synonym">pfk</name>
    <name type="ordered locus">spyM18_1231</name>
</gene>
<feature type="chain" id="PRO_0000111995" description="ATP-dependent 6-phosphofructokinase">
    <location>
        <begin position="1"/>
        <end position="337"/>
    </location>
</feature>
<feature type="active site" description="Proton acceptor" evidence="1">
    <location>
        <position position="127"/>
    </location>
</feature>
<feature type="binding site" evidence="1">
    <location>
        <position position="11"/>
    </location>
    <ligand>
        <name>ATP</name>
        <dbReference type="ChEBI" id="CHEBI:30616"/>
    </ligand>
</feature>
<feature type="binding site" evidence="1">
    <location>
        <begin position="21"/>
        <end position="25"/>
    </location>
    <ligand>
        <name>ADP</name>
        <dbReference type="ChEBI" id="CHEBI:456216"/>
        <note>allosteric activator; ligand shared between dimeric partners</note>
    </ligand>
</feature>
<feature type="binding site" evidence="1">
    <location>
        <begin position="72"/>
        <end position="73"/>
    </location>
    <ligand>
        <name>ATP</name>
        <dbReference type="ChEBI" id="CHEBI:30616"/>
    </ligand>
</feature>
<feature type="binding site" evidence="1">
    <location>
        <begin position="102"/>
        <end position="105"/>
    </location>
    <ligand>
        <name>ATP</name>
        <dbReference type="ChEBI" id="CHEBI:30616"/>
    </ligand>
</feature>
<feature type="binding site" evidence="1">
    <location>
        <position position="103"/>
    </location>
    <ligand>
        <name>Mg(2+)</name>
        <dbReference type="ChEBI" id="CHEBI:18420"/>
        <note>catalytic</note>
    </ligand>
</feature>
<feature type="binding site" description="in other chain" evidence="1">
    <location>
        <begin position="125"/>
        <end position="127"/>
    </location>
    <ligand>
        <name>substrate</name>
        <note>ligand shared between dimeric partners</note>
    </ligand>
</feature>
<feature type="binding site" description="in other chain" evidence="1">
    <location>
        <position position="154"/>
    </location>
    <ligand>
        <name>ADP</name>
        <dbReference type="ChEBI" id="CHEBI:456216"/>
        <note>allosteric activator; ligand shared between dimeric partners</note>
    </ligand>
</feature>
<feature type="binding site" evidence="1">
    <location>
        <position position="162"/>
    </location>
    <ligand>
        <name>substrate</name>
        <note>ligand shared between dimeric partners</note>
    </ligand>
</feature>
<feature type="binding site" description="in other chain" evidence="1">
    <location>
        <begin position="169"/>
        <end position="171"/>
    </location>
    <ligand>
        <name>substrate</name>
        <note>ligand shared between dimeric partners</note>
    </ligand>
</feature>
<feature type="binding site" description="in other chain" evidence="1">
    <location>
        <begin position="185"/>
        <end position="187"/>
    </location>
    <ligand>
        <name>ADP</name>
        <dbReference type="ChEBI" id="CHEBI:456216"/>
        <note>allosteric activator; ligand shared between dimeric partners</note>
    </ligand>
</feature>
<feature type="binding site" description="in other chain" evidence="1">
    <location>
        <position position="212"/>
    </location>
    <ligand>
        <name>ADP</name>
        <dbReference type="ChEBI" id="CHEBI:456216"/>
        <note>allosteric activator; ligand shared between dimeric partners</note>
    </ligand>
</feature>
<feature type="binding site" description="in other chain" evidence="1">
    <location>
        <begin position="214"/>
        <end position="216"/>
    </location>
    <ligand>
        <name>ADP</name>
        <dbReference type="ChEBI" id="CHEBI:456216"/>
        <note>allosteric activator; ligand shared between dimeric partners</note>
    </ligand>
</feature>
<feature type="binding site" description="in other chain" evidence="1">
    <location>
        <position position="223"/>
    </location>
    <ligand>
        <name>substrate</name>
        <note>ligand shared between dimeric partners</note>
    </ligand>
</feature>
<feature type="binding site" evidence="1">
    <location>
        <position position="245"/>
    </location>
    <ligand>
        <name>substrate</name>
        <note>ligand shared between dimeric partners</note>
    </ligand>
</feature>
<feature type="binding site" description="in other chain" evidence="1">
    <location>
        <begin position="251"/>
        <end position="254"/>
    </location>
    <ligand>
        <name>substrate</name>
        <note>ligand shared between dimeric partners</note>
    </ligand>
</feature>
<reference key="1">
    <citation type="journal article" date="2002" name="Proc. Natl. Acad. Sci. U.S.A.">
        <title>Genome sequence and comparative microarray analysis of serotype M18 group A Streptococcus strains associated with acute rheumatic fever outbreaks.</title>
        <authorList>
            <person name="Smoot J.C."/>
            <person name="Barbian K.D."/>
            <person name="Van Gompel J.J."/>
            <person name="Smoot L.M."/>
            <person name="Chaussee M.S."/>
            <person name="Sylva G.L."/>
            <person name="Sturdevant D.E."/>
            <person name="Ricklefs S.M."/>
            <person name="Porcella S.F."/>
            <person name="Parkins L.D."/>
            <person name="Beres S.B."/>
            <person name="Campbell D.S."/>
            <person name="Smith T.M."/>
            <person name="Zhang Q."/>
            <person name="Kapur V."/>
            <person name="Daly J.A."/>
            <person name="Veasy L.G."/>
            <person name="Musser J.M."/>
        </authorList>
    </citation>
    <scope>NUCLEOTIDE SEQUENCE [LARGE SCALE GENOMIC DNA]</scope>
    <source>
        <strain>MGAS8232</strain>
    </source>
</reference>
<organism>
    <name type="scientific">Streptococcus pyogenes serotype M18 (strain MGAS8232)</name>
    <dbReference type="NCBI Taxonomy" id="186103"/>
    <lineage>
        <taxon>Bacteria</taxon>
        <taxon>Bacillati</taxon>
        <taxon>Bacillota</taxon>
        <taxon>Bacilli</taxon>
        <taxon>Lactobacillales</taxon>
        <taxon>Streptococcaceae</taxon>
        <taxon>Streptococcus</taxon>
    </lineage>
</organism>
<comment type="function">
    <text evidence="1">Catalyzes the phosphorylation of D-fructose 6-phosphate to fructose 1,6-bisphosphate by ATP, the first committing step of glycolysis.</text>
</comment>
<comment type="catalytic activity">
    <reaction evidence="1">
        <text>beta-D-fructose 6-phosphate + ATP = beta-D-fructose 1,6-bisphosphate + ADP + H(+)</text>
        <dbReference type="Rhea" id="RHEA:16109"/>
        <dbReference type="ChEBI" id="CHEBI:15378"/>
        <dbReference type="ChEBI" id="CHEBI:30616"/>
        <dbReference type="ChEBI" id="CHEBI:32966"/>
        <dbReference type="ChEBI" id="CHEBI:57634"/>
        <dbReference type="ChEBI" id="CHEBI:456216"/>
        <dbReference type="EC" id="2.7.1.11"/>
    </reaction>
</comment>
<comment type="cofactor">
    <cofactor evidence="1">
        <name>Mg(2+)</name>
        <dbReference type="ChEBI" id="CHEBI:18420"/>
    </cofactor>
</comment>
<comment type="activity regulation">
    <text evidence="1">Allosterically activated by ADP and other diphosphonucleosides, and allosterically inhibited by phosphoenolpyruvate.</text>
</comment>
<comment type="pathway">
    <text evidence="1">Carbohydrate degradation; glycolysis; D-glyceraldehyde 3-phosphate and glycerone phosphate from D-glucose: step 3/4.</text>
</comment>
<comment type="subunit">
    <text evidence="1">Homotetramer.</text>
</comment>
<comment type="subcellular location">
    <subcellularLocation>
        <location evidence="1">Cytoplasm</location>
    </subcellularLocation>
</comment>
<comment type="similarity">
    <text evidence="1">Belongs to the phosphofructokinase type A (PFKA) family. ATP-dependent PFK group I subfamily. Prokaryotic clade 'B1' sub-subfamily.</text>
</comment>
<dbReference type="EC" id="2.7.1.11" evidence="1"/>
<dbReference type="EMBL" id="AE009949">
    <property type="protein sequence ID" value="AAL97841.1"/>
    <property type="molecule type" value="Genomic_DNA"/>
</dbReference>
<dbReference type="RefSeq" id="WP_002984444.1">
    <property type="nucleotide sequence ID" value="NC_003485.1"/>
</dbReference>
<dbReference type="SMR" id="Q8P0S6"/>
<dbReference type="GeneID" id="69900759"/>
<dbReference type="KEGG" id="spm:spyM18_1231"/>
<dbReference type="HOGENOM" id="CLU_020655_0_1_9"/>
<dbReference type="UniPathway" id="UPA00109">
    <property type="reaction ID" value="UER00182"/>
</dbReference>
<dbReference type="GO" id="GO:0005945">
    <property type="term" value="C:6-phosphofructokinase complex"/>
    <property type="evidence" value="ECO:0007669"/>
    <property type="project" value="TreeGrafter"/>
</dbReference>
<dbReference type="GO" id="GO:0003872">
    <property type="term" value="F:6-phosphofructokinase activity"/>
    <property type="evidence" value="ECO:0007669"/>
    <property type="project" value="UniProtKB-UniRule"/>
</dbReference>
<dbReference type="GO" id="GO:0016208">
    <property type="term" value="F:AMP binding"/>
    <property type="evidence" value="ECO:0007669"/>
    <property type="project" value="TreeGrafter"/>
</dbReference>
<dbReference type="GO" id="GO:0005524">
    <property type="term" value="F:ATP binding"/>
    <property type="evidence" value="ECO:0007669"/>
    <property type="project" value="UniProtKB-KW"/>
</dbReference>
<dbReference type="GO" id="GO:0070095">
    <property type="term" value="F:fructose-6-phosphate binding"/>
    <property type="evidence" value="ECO:0007669"/>
    <property type="project" value="TreeGrafter"/>
</dbReference>
<dbReference type="GO" id="GO:0042802">
    <property type="term" value="F:identical protein binding"/>
    <property type="evidence" value="ECO:0007669"/>
    <property type="project" value="TreeGrafter"/>
</dbReference>
<dbReference type="GO" id="GO:0046872">
    <property type="term" value="F:metal ion binding"/>
    <property type="evidence" value="ECO:0007669"/>
    <property type="project" value="UniProtKB-KW"/>
</dbReference>
<dbReference type="GO" id="GO:0048029">
    <property type="term" value="F:monosaccharide binding"/>
    <property type="evidence" value="ECO:0007669"/>
    <property type="project" value="TreeGrafter"/>
</dbReference>
<dbReference type="GO" id="GO:0061621">
    <property type="term" value="P:canonical glycolysis"/>
    <property type="evidence" value="ECO:0007669"/>
    <property type="project" value="TreeGrafter"/>
</dbReference>
<dbReference type="GO" id="GO:0030388">
    <property type="term" value="P:fructose 1,6-bisphosphate metabolic process"/>
    <property type="evidence" value="ECO:0007669"/>
    <property type="project" value="TreeGrafter"/>
</dbReference>
<dbReference type="GO" id="GO:0006002">
    <property type="term" value="P:fructose 6-phosphate metabolic process"/>
    <property type="evidence" value="ECO:0007669"/>
    <property type="project" value="InterPro"/>
</dbReference>
<dbReference type="FunFam" id="3.40.50.450:FF:000001">
    <property type="entry name" value="ATP-dependent 6-phosphofructokinase"/>
    <property type="match status" value="1"/>
</dbReference>
<dbReference type="FunFam" id="3.40.50.460:FF:000002">
    <property type="entry name" value="ATP-dependent 6-phosphofructokinase"/>
    <property type="match status" value="1"/>
</dbReference>
<dbReference type="Gene3D" id="3.40.50.450">
    <property type="match status" value="1"/>
</dbReference>
<dbReference type="Gene3D" id="3.40.50.460">
    <property type="entry name" value="Phosphofructokinase domain"/>
    <property type="match status" value="1"/>
</dbReference>
<dbReference type="HAMAP" id="MF_00339">
    <property type="entry name" value="Phosphofructokinase_I_B1"/>
    <property type="match status" value="1"/>
</dbReference>
<dbReference type="InterPro" id="IPR022953">
    <property type="entry name" value="ATP_PFK"/>
</dbReference>
<dbReference type="InterPro" id="IPR012003">
    <property type="entry name" value="ATP_PFK_prok-type"/>
</dbReference>
<dbReference type="InterPro" id="IPR012828">
    <property type="entry name" value="PFKA_ATP_prok"/>
</dbReference>
<dbReference type="InterPro" id="IPR015912">
    <property type="entry name" value="Phosphofructokinase_CS"/>
</dbReference>
<dbReference type="InterPro" id="IPR000023">
    <property type="entry name" value="Phosphofructokinase_dom"/>
</dbReference>
<dbReference type="InterPro" id="IPR035966">
    <property type="entry name" value="PKF_sf"/>
</dbReference>
<dbReference type="NCBIfam" id="TIGR02482">
    <property type="entry name" value="PFKA_ATP"/>
    <property type="match status" value="1"/>
</dbReference>
<dbReference type="NCBIfam" id="NF002872">
    <property type="entry name" value="PRK03202.1"/>
    <property type="match status" value="1"/>
</dbReference>
<dbReference type="PANTHER" id="PTHR13697:SF4">
    <property type="entry name" value="ATP-DEPENDENT 6-PHOSPHOFRUCTOKINASE"/>
    <property type="match status" value="1"/>
</dbReference>
<dbReference type="PANTHER" id="PTHR13697">
    <property type="entry name" value="PHOSPHOFRUCTOKINASE"/>
    <property type="match status" value="1"/>
</dbReference>
<dbReference type="Pfam" id="PF00365">
    <property type="entry name" value="PFK"/>
    <property type="match status" value="1"/>
</dbReference>
<dbReference type="PIRSF" id="PIRSF000532">
    <property type="entry name" value="ATP_PFK_prok"/>
    <property type="match status" value="1"/>
</dbReference>
<dbReference type="PRINTS" id="PR00476">
    <property type="entry name" value="PHFRCTKINASE"/>
</dbReference>
<dbReference type="SUPFAM" id="SSF53784">
    <property type="entry name" value="Phosphofructokinase"/>
    <property type="match status" value="1"/>
</dbReference>
<dbReference type="PROSITE" id="PS00433">
    <property type="entry name" value="PHOSPHOFRUCTOKINASE"/>
    <property type="match status" value="1"/>
</dbReference>